<dbReference type="EC" id="2.4.1.21" evidence="1"/>
<dbReference type="EMBL" id="CT978603">
    <property type="protein sequence ID" value="CAK28047.1"/>
    <property type="molecule type" value="Genomic_DNA"/>
</dbReference>
<dbReference type="SMR" id="A5GT38"/>
<dbReference type="STRING" id="316278.SynRCC307_1144"/>
<dbReference type="CAZy" id="GT5">
    <property type="family name" value="Glycosyltransferase Family 5"/>
</dbReference>
<dbReference type="KEGG" id="syr:SynRCC307_1144"/>
<dbReference type="eggNOG" id="COG0297">
    <property type="taxonomic scope" value="Bacteria"/>
</dbReference>
<dbReference type="HOGENOM" id="CLU_009583_18_2_3"/>
<dbReference type="OrthoDB" id="9808590at2"/>
<dbReference type="UniPathway" id="UPA00164"/>
<dbReference type="Proteomes" id="UP000001115">
    <property type="component" value="Chromosome"/>
</dbReference>
<dbReference type="GO" id="GO:0009011">
    <property type="term" value="F:alpha-1,4-glucan glucosyltransferase (ADP-glucose donor) activity"/>
    <property type="evidence" value="ECO:0007669"/>
    <property type="project" value="UniProtKB-UniRule"/>
</dbReference>
<dbReference type="GO" id="GO:0004373">
    <property type="term" value="F:alpha-1,4-glucan glucosyltransferase (UDP-glucose donor) activity"/>
    <property type="evidence" value="ECO:0007669"/>
    <property type="project" value="InterPro"/>
</dbReference>
<dbReference type="GO" id="GO:0005978">
    <property type="term" value="P:glycogen biosynthetic process"/>
    <property type="evidence" value="ECO:0007669"/>
    <property type="project" value="UniProtKB-UniRule"/>
</dbReference>
<dbReference type="CDD" id="cd03791">
    <property type="entry name" value="GT5_Glycogen_synthase_DULL1-like"/>
    <property type="match status" value="1"/>
</dbReference>
<dbReference type="Gene3D" id="3.40.50.2000">
    <property type="entry name" value="Glycogen Phosphorylase B"/>
    <property type="match status" value="2"/>
</dbReference>
<dbReference type="HAMAP" id="MF_00484">
    <property type="entry name" value="Glycogen_synth"/>
    <property type="match status" value="1"/>
</dbReference>
<dbReference type="InterPro" id="IPR001296">
    <property type="entry name" value="Glyco_trans_1"/>
</dbReference>
<dbReference type="InterPro" id="IPR011835">
    <property type="entry name" value="GS/SS"/>
</dbReference>
<dbReference type="InterPro" id="IPR013534">
    <property type="entry name" value="Starch_synth_cat_dom"/>
</dbReference>
<dbReference type="NCBIfam" id="TIGR02095">
    <property type="entry name" value="glgA"/>
    <property type="match status" value="1"/>
</dbReference>
<dbReference type="NCBIfam" id="NF001900">
    <property type="entry name" value="PRK00654.1-3"/>
    <property type="match status" value="1"/>
</dbReference>
<dbReference type="PANTHER" id="PTHR45825:SF11">
    <property type="entry name" value="ALPHA AMYLASE DOMAIN-CONTAINING PROTEIN"/>
    <property type="match status" value="1"/>
</dbReference>
<dbReference type="PANTHER" id="PTHR45825">
    <property type="entry name" value="GRANULE-BOUND STARCH SYNTHASE 1, CHLOROPLASTIC/AMYLOPLASTIC"/>
    <property type="match status" value="1"/>
</dbReference>
<dbReference type="Pfam" id="PF08323">
    <property type="entry name" value="Glyco_transf_5"/>
    <property type="match status" value="1"/>
</dbReference>
<dbReference type="Pfam" id="PF00534">
    <property type="entry name" value="Glycos_transf_1"/>
    <property type="match status" value="1"/>
</dbReference>
<dbReference type="SUPFAM" id="SSF53756">
    <property type="entry name" value="UDP-Glycosyltransferase/glycogen phosphorylase"/>
    <property type="match status" value="1"/>
</dbReference>
<comment type="function">
    <text evidence="1">Synthesizes alpha-1,4-glucan chains using ADP-glucose.</text>
</comment>
<comment type="catalytic activity">
    <reaction evidence="1">
        <text>[(1-&gt;4)-alpha-D-glucosyl](n) + ADP-alpha-D-glucose = [(1-&gt;4)-alpha-D-glucosyl](n+1) + ADP + H(+)</text>
        <dbReference type="Rhea" id="RHEA:18189"/>
        <dbReference type="Rhea" id="RHEA-COMP:9584"/>
        <dbReference type="Rhea" id="RHEA-COMP:9587"/>
        <dbReference type="ChEBI" id="CHEBI:15378"/>
        <dbReference type="ChEBI" id="CHEBI:15444"/>
        <dbReference type="ChEBI" id="CHEBI:57498"/>
        <dbReference type="ChEBI" id="CHEBI:456216"/>
        <dbReference type="EC" id="2.4.1.21"/>
    </reaction>
</comment>
<comment type="pathway">
    <text evidence="1">Glycan biosynthesis; glycogen biosynthesis.</text>
</comment>
<comment type="similarity">
    <text evidence="1">Belongs to the glycosyltransferase 1 family. Bacterial/plant glycogen synthase subfamily.</text>
</comment>
<organism>
    <name type="scientific">Synechococcus sp. (strain RCC307)</name>
    <dbReference type="NCBI Taxonomy" id="316278"/>
    <lineage>
        <taxon>Bacteria</taxon>
        <taxon>Bacillati</taxon>
        <taxon>Cyanobacteriota</taxon>
        <taxon>Cyanophyceae</taxon>
        <taxon>Synechococcales</taxon>
        <taxon>Synechococcaceae</taxon>
        <taxon>Synechococcus</taxon>
    </lineage>
</organism>
<protein>
    <recommendedName>
        <fullName evidence="1">Glycogen synthase</fullName>
        <ecNumber evidence="1">2.4.1.21</ecNumber>
    </recommendedName>
    <alternativeName>
        <fullName evidence="1">Starch [bacterial glycogen] synthase</fullName>
    </alternativeName>
</protein>
<proteinExistence type="inferred from homology"/>
<evidence type="ECO:0000255" key="1">
    <source>
        <dbReference type="HAMAP-Rule" id="MF_00484"/>
    </source>
</evidence>
<evidence type="ECO:0000256" key="2">
    <source>
        <dbReference type="SAM" id="MobiDB-lite"/>
    </source>
</evidence>
<gene>
    <name evidence="1" type="primary">glgA</name>
    <name type="ordered locus">SynRCC307_1144</name>
</gene>
<keyword id="KW-0320">Glycogen biosynthesis</keyword>
<keyword id="KW-0328">Glycosyltransferase</keyword>
<keyword id="KW-1185">Reference proteome</keyword>
<keyword id="KW-0808">Transferase</keyword>
<reference key="1">
    <citation type="submission" date="2006-05" db="EMBL/GenBank/DDBJ databases">
        <authorList>
            <consortium name="Genoscope"/>
        </authorList>
    </citation>
    <scope>NUCLEOTIDE SEQUENCE [LARGE SCALE GENOMIC DNA]</scope>
    <source>
        <strain>RCC307</strain>
    </source>
</reference>
<sequence>MRILFAAAECAPMVKVGGMGDVVGSLPPALAELGHDVRVIMPGYGKLWSQLDVPSEPIWRAQTMGTDFAVYETRHPKTGLTIYLVGHPVFDGERIYGGEDEDWRFTFFASATSEFAWNAWKPQVLHCHDWHTGMIPVWMHQDPEISTVFTIHNLKYQGPWRWKLERMTWCPWYMQGDHTMAAALLYADRVNAVSPTYAQEIRTPEYGEQLEGLLNYISGKLRGILNGIDVEAWNPATDSRIPATYSTADLSGKAVCKRALQERMGLQVNPDTFVIGLVSRLVDQKGVDLLLQVAERFLAYTDTQIVVLGTGDRHLESGLWQMASQHSGRFASFLTYDDDLSRLIYAGSDAFLMPSRFEPCGISQLLSMRYGTIPVVRRVGGLVDTVPPYVPATQEGNGFCFDRYEAIDLYTALVRAWEAYRHQDSWQQLMKRVMQVDFSWARSALEYDRMYRDVCGMKEPTPEADAVAAFSIPQPPEQQAARAAAEAADPNPQRRFNPLGLLRRNGG</sequence>
<feature type="chain" id="PRO_1000014387" description="Glycogen synthase">
    <location>
        <begin position="1"/>
        <end position="507"/>
    </location>
</feature>
<feature type="region of interest" description="Disordered" evidence="2">
    <location>
        <begin position="475"/>
        <end position="507"/>
    </location>
</feature>
<feature type="compositionally biased region" description="Low complexity" evidence="2">
    <location>
        <begin position="477"/>
        <end position="494"/>
    </location>
</feature>
<feature type="binding site" evidence="1">
    <location>
        <position position="15"/>
    </location>
    <ligand>
        <name>ADP-alpha-D-glucose</name>
        <dbReference type="ChEBI" id="CHEBI:57498"/>
    </ligand>
</feature>
<accession>A5GT38</accession>
<name>GLGA_SYNR3</name>